<evidence type="ECO:0000250" key="1"/>
<evidence type="ECO:0000305" key="2"/>
<proteinExistence type="inferred from homology"/>
<keyword id="KW-0539">Nucleus</keyword>
<keyword id="KW-1185">Reference proteome</keyword>
<keyword id="KW-0804">Transcription</keyword>
<keyword id="KW-0805">Transcription regulation</keyword>
<protein>
    <recommendedName>
        <fullName>Regulator of rDNA transcription 14</fullName>
    </recommendedName>
</protein>
<organism>
    <name type="scientific">Candida tropicalis (strain ATCC MYA-3404 / T1)</name>
    <name type="common">Yeast</name>
    <dbReference type="NCBI Taxonomy" id="294747"/>
    <lineage>
        <taxon>Eukaryota</taxon>
        <taxon>Fungi</taxon>
        <taxon>Dikarya</taxon>
        <taxon>Ascomycota</taxon>
        <taxon>Saccharomycotina</taxon>
        <taxon>Pichiomycetes</taxon>
        <taxon>Debaryomycetaceae</taxon>
        <taxon>Candida/Lodderomyces clade</taxon>
        <taxon>Candida</taxon>
    </lineage>
</organism>
<comment type="function">
    <text evidence="1">Involved in ribosome biogenesis, probably through modulation of rDNA transcription.</text>
</comment>
<comment type="subcellular location">
    <subcellularLocation>
        <location evidence="1">Nucleus</location>
        <location evidence="1">Nucleolus</location>
    </subcellularLocation>
</comment>
<comment type="similarity">
    <text evidence="2">Belongs to the RRT14 family.</text>
</comment>
<accession>C5M9K8</accession>
<gene>
    <name type="primary">RRT14</name>
    <name type="ORF">CTRG_02170</name>
</gene>
<feature type="chain" id="PRO_0000404339" description="Regulator of rDNA transcription 14">
    <location>
        <begin position="1"/>
        <end position="185"/>
    </location>
</feature>
<sequence length="185" mass="21293">MSSSFSSDASQYQAENTVNKLFSNILHTNISTTKSTTNANQLFAQHGSSVKKNKKNEAKRIKKNEERTKAFNKFVKYNYIKNKENKNESDKKYLSKLVRKNVNKLNSSSKIDDFEINEEFNIVSSELLDQIKPKNGKRLRKKLFRVNENDERAKEFNEKLQKGVISYPGLTPGLAPVDYNESDSE</sequence>
<name>RRT14_CANTT</name>
<reference key="1">
    <citation type="journal article" date="2009" name="Nature">
        <title>Evolution of pathogenicity and sexual reproduction in eight Candida genomes.</title>
        <authorList>
            <person name="Butler G."/>
            <person name="Rasmussen M.D."/>
            <person name="Lin M.F."/>
            <person name="Santos M.A.S."/>
            <person name="Sakthikumar S."/>
            <person name="Munro C.A."/>
            <person name="Rheinbay E."/>
            <person name="Grabherr M."/>
            <person name="Forche A."/>
            <person name="Reedy J.L."/>
            <person name="Agrafioti I."/>
            <person name="Arnaud M.B."/>
            <person name="Bates S."/>
            <person name="Brown A.J.P."/>
            <person name="Brunke S."/>
            <person name="Costanzo M.C."/>
            <person name="Fitzpatrick D.A."/>
            <person name="de Groot P.W.J."/>
            <person name="Harris D."/>
            <person name="Hoyer L.L."/>
            <person name="Hube B."/>
            <person name="Klis F.M."/>
            <person name="Kodira C."/>
            <person name="Lennard N."/>
            <person name="Logue M.E."/>
            <person name="Martin R."/>
            <person name="Neiman A.M."/>
            <person name="Nikolaou E."/>
            <person name="Quail M.A."/>
            <person name="Quinn J."/>
            <person name="Santos M.C."/>
            <person name="Schmitzberger F.F."/>
            <person name="Sherlock G."/>
            <person name="Shah P."/>
            <person name="Silverstein K.A.T."/>
            <person name="Skrzypek M.S."/>
            <person name="Soll D."/>
            <person name="Staggs R."/>
            <person name="Stansfield I."/>
            <person name="Stumpf M.P.H."/>
            <person name="Sudbery P.E."/>
            <person name="Srikantha T."/>
            <person name="Zeng Q."/>
            <person name="Berman J."/>
            <person name="Berriman M."/>
            <person name="Heitman J."/>
            <person name="Gow N.A.R."/>
            <person name="Lorenz M.C."/>
            <person name="Birren B.W."/>
            <person name="Kellis M."/>
            <person name="Cuomo C.A."/>
        </authorList>
    </citation>
    <scope>NUCLEOTIDE SEQUENCE [LARGE SCALE GENOMIC DNA]</scope>
    <source>
        <strain>ATCC MYA-3404 / T1</strain>
    </source>
</reference>
<dbReference type="EMBL" id="GG692397">
    <property type="protein sequence ID" value="EER33352.1"/>
    <property type="molecule type" value="Genomic_DNA"/>
</dbReference>
<dbReference type="RefSeq" id="XP_002547873.1">
    <property type="nucleotide sequence ID" value="XM_002547827.1"/>
</dbReference>
<dbReference type="SMR" id="C5M9K8"/>
<dbReference type="STRING" id="294747.C5M9K8"/>
<dbReference type="EnsemblFungi" id="CTRG_02170-t43_1">
    <property type="protein sequence ID" value="CTRG_02170-t43_1-p1"/>
    <property type="gene ID" value="CTRG_02170"/>
</dbReference>
<dbReference type="GeneID" id="8296304"/>
<dbReference type="KEGG" id="ctp:CTRG_02170"/>
<dbReference type="VEuPathDB" id="FungiDB:CTRG_02170"/>
<dbReference type="eggNOG" id="ENOG502S1G1">
    <property type="taxonomic scope" value="Eukaryota"/>
</dbReference>
<dbReference type="HOGENOM" id="CLU_095038_0_0_1"/>
<dbReference type="OrthoDB" id="4069371at2759"/>
<dbReference type="Proteomes" id="UP000002037">
    <property type="component" value="Unassembled WGS sequence"/>
</dbReference>
<dbReference type="GO" id="GO:0005730">
    <property type="term" value="C:nucleolus"/>
    <property type="evidence" value="ECO:0007669"/>
    <property type="project" value="UniProtKB-SubCell"/>
</dbReference>
<dbReference type="InterPro" id="IPR031404">
    <property type="entry name" value="Rrt14"/>
</dbReference>
<dbReference type="Pfam" id="PF17075">
    <property type="entry name" value="RRT14"/>
    <property type="match status" value="1"/>
</dbReference>